<dbReference type="SMR" id="P83977"/>
<dbReference type="GO" id="GO:0019814">
    <property type="term" value="C:immunoglobulin complex"/>
    <property type="evidence" value="ECO:0007669"/>
    <property type="project" value="UniProtKB-KW"/>
</dbReference>
<dbReference type="GO" id="GO:0002250">
    <property type="term" value="P:adaptive immune response"/>
    <property type="evidence" value="ECO:0007669"/>
    <property type="project" value="UniProtKB-KW"/>
</dbReference>
<dbReference type="Gene3D" id="2.60.40.10">
    <property type="entry name" value="Immunoglobulins"/>
    <property type="match status" value="1"/>
</dbReference>
<dbReference type="InterPro" id="IPR036179">
    <property type="entry name" value="Ig-like_dom_sf"/>
</dbReference>
<dbReference type="InterPro" id="IPR013783">
    <property type="entry name" value="Ig-like_fold"/>
</dbReference>
<dbReference type="InterPro" id="IPR003006">
    <property type="entry name" value="Ig/MHC_CS"/>
</dbReference>
<dbReference type="SUPFAM" id="SSF48726">
    <property type="entry name" value="Immunoglobulin"/>
    <property type="match status" value="1"/>
</dbReference>
<dbReference type="PROSITE" id="PS00290">
    <property type="entry name" value="IG_MHC"/>
    <property type="match status" value="1"/>
</dbReference>
<keyword id="KW-1064">Adaptive immunity</keyword>
<keyword id="KW-0325">Glycoprotein</keyword>
<keyword id="KW-0391">Immunity</keyword>
<keyword id="KW-1280">Immunoglobulin</keyword>
<keyword id="KW-0393">Immunoglobulin domain</keyword>
<comment type="tissue specificity">
    <text evidence="3">Expressed mainly in lymphoid tissues including spleen, epigonal organ and circulating lymphocytes. Also expressed at low levels in the pancreas.</text>
</comment>
<name>IGNAR_GINCI</name>
<evidence type="ECO:0000255" key="1"/>
<evidence type="ECO:0000256" key="2">
    <source>
        <dbReference type="SAM" id="MobiDB-lite"/>
    </source>
</evidence>
<evidence type="ECO:0000269" key="3">
    <source>
    </source>
</evidence>
<evidence type="ECO:0000303" key="4">
    <source>
    </source>
</evidence>
<evidence type="ECO:0000305" key="5"/>
<protein>
    <recommendedName>
        <fullName>IgNAR transmembrane form NE</fullName>
    </recommendedName>
</protein>
<accession>P83977</accession>
<feature type="chain" id="PRO_0000059859" description="IgNAR transmembrane form NE">
    <location>
        <begin position="1" status="less than"/>
        <end position="95"/>
    </location>
</feature>
<feature type="domain" description="Ig-like">
    <location>
        <begin position="1" status="less than"/>
        <end position="36"/>
    </location>
</feature>
<feature type="region of interest" description="Disordered" evidence="2">
    <location>
        <begin position="24"/>
        <end position="79"/>
    </location>
</feature>
<feature type="compositionally biased region" description="Polar residues" evidence="2">
    <location>
        <begin position="24"/>
        <end position="35"/>
    </location>
</feature>
<feature type="compositionally biased region" description="Basic and acidic residues" evidence="2">
    <location>
        <begin position="41"/>
        <end position="56"/>
    </location>
</feature>
<feature type="compositionally biased region" description="Acidic residues" evidence="2">
    <location>
        <begin position="61"/>
        <end position="77"/>
    </location>
</feature>
<feature type="glycosylation site" description="N-linked (GlcNAc...) asparagine" evidence="1">
    <location>
        <position position="81"/>
    </location>
</feature>
<feature type="non-terminal residue" evidence="4">
    <location>
        <position position="1"/>
    </location>
</feature>
<organism>
    <name type="scientific">Ginglymostoma cirratum</name>
    <name type="common">Nurse shark</name>
    <name type="synonym">Squalus cirratus</name>
    <dbReference type="NCBI Taxonomy" id="7801"/>
    <lineage>
        <taxon>Eukaryota</taxon>
        <taxon>Metazoa</taxon>
        <taxon>Chordata</taxon>
        <taxon>Craniata</taxon>
        <taxon>Vertebrata</taxon>
        <taxon>Chondrichthyes</taxon>
        <taxon>Elasmobranchii</taxon>
        <taxon>Galeomorphii</taxon>
        <taxon>Galeoidea</taxon>
        <taxon>Orectolobiformes</taxon>
        <taxon>Ginglymostomatidae</taxon>
        <taxon>Ginglymostoma</taxon>
    </lineage>
</organism>
<reference evidence="5" key="1">
    <citation type="journal article" date="2004" name="J. Immunol.">
        <title>Unprecedented multiplicity of Ig transmembrane and secretory mRNA forms in the cartilaginous fish.</title>
        <authorList>
            <person name="Rumfelt L.L."/>
            <person name="Diaz M."/>
            <person name="Lohr R.L."/>
            <person name="Mochon E."/>
            <person name="Flajnik M.F."/>
        </authorList>
    </citation>
    <scope>NUCLEOTIDE SEQUENCE</scope>
    <scope>TISSUE SPECIFICITY</scope>
    <source>
        <tissue evidence="3">Spleen</tissue>
    </source>
</reference>
<proteinExistence type="evidence at transcript level"/>
<sequence length="95" mass="10581">LTFSTRSLLNLPAVEWKSGAKYTCTASHSPSQSTVKRVIRNPKESPKGSSETRKSPLEIMESPEDYGTEEDQLENVNEDSNSSLSIMTFVILFIL</sequence>